<reference key="1">
    <citation type="submission" date="2008-10" db="EMBL/GenBank/DDBJ databases">
        <title>Genome sequence of Bacillus cereus AH820.</title>
        <authorList>
            <person name="Dodson R.J."/>
            <person name="Durkin A.S."/>
            <person name="Rosovitz M.J."/>
            <person name="Rasko D.A."/>
            <person name="Hoffmaster A."/>
            <person name="Ravel J."/>
            <person name="Sutton G."/>
        </authorList>
    </citation>
    <scope>NUCLEOTIDE SEQUENCE [LARGE SCALE GENOMIC DNA]</scope>
    <source>
        <strain>AH820</strain>
    </source>
</reference>
<name>METK_BACC0</name>
<comment type="function">
    <text evidence="1">Catalyzes the formation of S-adenosylmethionine (AdoMet) from methionine and ATP. The overall synthetic reaction is composed of two sequential steps, AdoMet formation and the subsequent tripolyphosphate hydrolysis which occurs prior to release of AdoMet from the enzyme.</text>
</comment>
<comment type="catalytic activity">
    <reaction evidence="1">
        <text>L-methionine + ATP + H2O = S-adenosyl-L-methionine + phosphate + diphosphate</text>
        <dbReference type="Rhea" id="RHEA:21080"/>
        <dbReference type="ChEBI" id="CHEBI:15377"/>
        <dbReference type="ChEBI" id="CHEBI:30616"/>
        <dbReference type="ChEBI" id="CHEBI:33019"/>
        <dbReference type="ChEBI" id="CHEBI:43474"/>
        <dbReference type="ChEBI" id="CHEBI:57844"/>
        <dbReference type="ChEBI" id="CHEBI:59789"/>
        <dbReference type="EC" id="2.5.1.6"/>
    </reaction>
</comment>
<comment type="cofactor">
    <cofactor evidence="1">
        <name>Mg(2+)</name>
        <dbReference type="ChEBI" id="CHEBI:18420"/>
    </cofactor>
    <text evidence="1">Binds 2 divalent ions per subunit.</text>
</comment>
<comment type="cofactor">
    <cofactor evidence="1">
        <name>K(+)</name>
        <dbReference type="ChEBI" id="CHEBI:29103"/>
    </cofactor>
    <text evidence="1">Binds 1 potassium ion per subunit.</text>
</comment>
<comment type="pathway">
    <text evidence="1">Amino-acid biosynthesis; S-adenosyl-L-methionine biosynthesis; S-adenosyl-L-methionine from L-methionine: step 1/1.</text>
</comment>
<comment type="subunit">
    <text evidence="1">Homotetramer; dimer of dimers.</text>
</comment>
<comment type="subcellular location">
    <subcellularLocation>
        <location evidence="1">Cytoplasm</location>
    </subcellularLocation>
</comment>
<comment type="similarity">
    <text evidence="1">Belongs to the AdoMet synthase family.</text>
</comment>
<organism>
    <name type="scientific">Bacillus cereus (strain AH820)</name>
    <dbReference type="NCBI Taxonomy" id="405535"/>
    <lineage>
        <taxon>Bacteria</taxon>
        <taxon>Bacillati</taxon>
        <taxon>Bacillota</taxon>
        <taxon>Bacilli</taxon>
        <taxon>Bacillales</taxon>
        <taxon>Bacillaceae</taxon>
        <taxon>Bacillus</taxon>
        <taxon>Bacillus cereus group</taxon>
    </lineage>
</organism>
<accession>B7JT32</accession>
<sequence>MTKKRHLFTSESVTEGHPDKICDQISDSILDAILSKDANARVACETTVTTGLVLVAGEITTSTYVDIPKIVRETIQGIGYTRAKYGFDAETCAVLTSIDEQSADIAMGVDQALEAREGQMTDAEIEAIGAGDQGLMFGFACNETQELMPLPISLAHKLARRLTEVRKNDTLSYLRPDGKTQVTVEYDENGKPVRVDTIVISTQHHPDVTWEEIDRDLKEHVIKAVVPAELIDGETKFFINPTGRFVIGGPQGDAGLTGRKIIVDTYGGYARHGGGAFSGKDATKVDRSAAYAARYVAKNIVAAGLAEKAEVQLAYAIGVAQPVSISVDTFGTGKVSEDVLVELVRNNFDLRPAGIIKMLDLRRPIYKQTAAYGHFGRTDVDLSWERTDKAAALKEQAGL</sequence>
<protein>
    <recommendedName>
        <fullName evidence="1">S-adenosylmethionine synthase</fullName>
        <shortName evidence="1">AdoMet synthase</shortName>
        <ecNumber evidence="1">2.5.1.6</ecNumber>
    </recommendedName>
    <alternativeName>
        <fullName evidence="1">MAT</fullName>
    </alternativeName>
    <alternativeName>
        <fullName evidence="1">Methionine adenosyltransferase</fullName>
    </alternativeName>
</protein>
<dbReference type="EC" id="2.5.1.6" evidence="1"/>
<dbReference type="EMBL" id="CP001283">
    <property type="protein sequence ID" value="ACK90922.1"/>
    <property type="molecule type" value="Genomic_DNA"/>
</dbReference>
<dbReference type="RefSeq" id="WP_000163125.1">
    <property type="nucleotide sequence ID" value="NC_011773.1"/>
</dbReference>
<dbReference type="SMR" id="B7JT32"/>
<dbReference type="GeneID" id="75087933"/>
<dbReference type="KEGG" id="bcu:BCAH820_4886"/>
<dbReference type="HOGENOM" id="CLU_041802_1_1_9"/>
<dbReference type="UniPathway" id="UPA00315">
    <property type="reaction ID" value="UER00080"/>
</dbReference>
<dbReference type="Proteomes" id="UP000001363">
    <property type="component" value="Chromosome"/>
</dbReference>
<dbReference type="GO" id="GO:0005737">
    <property type="term" value="C:cytoplasm"/>
    <property type="evidence" value="ECO:0007669"/>
    <property type="project" value="UniProtKB-SubCell"/>
</dbReference>
<dbReference type="GO" id="GO:0005524">
    <property type="term" value="F:ATP binding"/>
    <property type="evidence" value="ECO:0007669"/>
    <property type="project" value="UniProtKB-UniRule"/>
</dbReference>
<dbReference type="GO" id="GO:0000287">
    <property type="term" value="F:magnesium ion binding"/>
    <property type="evidence" value="ECO:0007669"/>
    <property type="project" value="UniProtKB-UniRule"/>
</dbReference>
<dbReference type="GO" id="GO:0004478">
    <property type="term" value="F:methionine adenosyltransferase activity"/>
    <property type="evidence" value="ECO:0007669"/>
    <property type="project" value="UniProtKB-UniRule"/>
</dbReference>
<dbReference type="GO" id="GO:0006730">
    <property type="term" value="P:one-carbon metabolic process"/>
    <property type="evidence" value="ECO:0007669"/>
    <property type="project" value="UniProtKB-KW"/>
</dbReference>
<dbReference type="GO" id="GO:0006556">
    <property type="term" value="P:S-adenosylmethionine biosynthetic process"/>
    <property type="evidence" value="ECO:0007669"/>
    <property type="project" value="UniProtKB-UniRule"/>
</dbReference>
<dbReference type="CDD" id="cd18079">
    <property type="entry name" value="S-AdoMet_synt"/>
    <property type="match status" value="1"/>
</dbReference>
<dbReference type="FunFam" id="3.30.300.10:FF:000003">
    <property type="entry name" value="S-adenosylmethionine synthase"/>
    <property type="match status" value="1"/>
</dbReference>
<dbReference type="FunFam" id="3.30.300.10:FF:000004">
    <property type="entry name" value="S-adenosylmethionine synthase"/>
    <property type="match status" value="1"/>
</dbReference>
<dbReference type="Gene3D" id="3.30.300.10">
    <property type="match status" value="3"/>
</dbReference>
<dbReference type="HAMAP" id="MF_00086">
    <property type="entry name" value="S_AdoMet_synth1"/>
    <property type="match status" value="1"/>
</dbReference>
<dbReference type="InterPro" id="IPR022631">
    <property type="entry name" value="ADOMET_SYNTHASE_CS"/>
</dbReference>
<dbReference type="InterPro" id="IPR022630">
    <property type="entry name" value="S-AdoMet_synt_C"/>
</dbReference>
<dbReference type="InterPro" id="IPR022629">
    <property type="entry name" value="S-AdoMet_synt_central"/>
</dbReference>
<dbReference type="InterPro" id="IPR022628">
    <property type="entry name" value="S-AdoMet_synt_N"/>
</dbReference>
<dbReference type="InterPro" id="IPR002133">
    <property type="entry name" value="S-AdoMet_synthetase"/>
</dbReference>
<dbReference type="InterPro" id="IPR022636">
    <property type="entry name" value="S-AdoMet_synthetase_sfam"/>
</dbReference>
<dbReference type="NCBIfam" id="TIGR01034">
    <property type="entry name" value="metK"/>
    <property type="match status" value="1"/>
</dbReference>
<dbReference type="PANTHER" id="PTHR11964">
    <property type="entry name" value="S-ADENOSYLMETHIONINE SYNTHETASE"/>
    <property type="match status" value="1"/>
</dbReference>
<dbReference type="Pfam" id="PF02773">
    <property type="entry name" value="S-AdoMet_synt_C"/>
    <property type="match status" value="1"/>
</dbReference>
<dbReference type="Pfam" id="PF02772">
    <property type="entry name" value="S-AdoMet_synt_M"/>
    <property type="match status" value="1"/>
</dbReference>
<dbReference type="Pfam" id="PF00438">
    <property type="entry name" value="S-AdoMet_synt_N"/>
    <property type="match status" value="1"/>
</dbReference>
<dbReference type="PIRSF" id="PIRSF000497">
    <property type="entry name" value="MAT"/>
    <property type="match status" value="1"/>
</dbReference>
<dbReference type="SUPFAM" id="SSF55973">
    <property type="entry name" value="S-adenosylmethionine synthetase"/>
    <property type="match status" value="3"/>
</dbReference>
<dbReference type="PROSITE" id="PS00376">
    <property type="entry name" value="ADOMET_SYNTHASE_1"/>
    <property type="match status" value="1"/>
</dbReference>
<dbReference type="PROSITE" id="PS00377">
    <property type="entry name" value="ADOMET_SYNTHASE_2"/>
    <property type="match status" value="1"/>
</dbReference>
<evidence type="ECO:0000255" key="1">
    <source>
        <dbReference type="HAMAP-Rule" id="MF_00086"/>
    </source>
</evidence>
<gene>
    <name evidence="1" type="primary">metK</name>
    <name type="ordered locus">BCAH820_4886</name>
</gene>
<feature type="chain" id="PRO_1000196686" description="S-adenosylmethionine synthase">
    <location>
        <begin position="1"/>
        <end position="399"/>
    </location>
</feature>
<feature type="region of interest" description="Flexible loop" evidence="1">
    <location>
        <begin position="101"/>
        <end position="111"/>
    </location>
</feature>
<feature type="binding site" description="in other chain" evidence="1">
    <location>
        <position position="17"/>
    </location>
    <ligand>
        <name>ATP</name>
        <dbReference type="ChEBI" id="CHEBI:30616"/>
        <note>ligand shared between two neighboring subunits</note>
    </ligand>
</feature>
<feature type="binding site" evidence="1">
    <location>
        <position position="19"/>
    </location>
    <ligand>
        <name>Mg(2+)</name>
        <dbReference type="ChEBI" id="CHEBI:18420"/>
    </ligand>
</feature>
<feature type="binding site" evidence="1">
    <location>
        <position position="45"/>
    </location>
    <ligand>
        <name>K(+)</name>
        <dbReference type="ChEBI" id="CHEBI:29103"/>
    </ligand>
</feature>
<feature type="binding site" description="in other chain" evidence="1">
    <location>
        <position position="58"/>
    </location>
    <ligand>
        <name>L-methionine</name>
        <dbReference type="ChEBI" id="CHEBI:57844"/>
        <note>ligand shared between two neighboring subunits</note>
    </ligand>
</feature>
<feature type="binding site" description="in other chain" evidence="1">
    <location>
        <position position="101"/>
    </location>
    <ligand>
        <name>L-methionine</name>
        <dbReference type="ChEBI" id="CHEBI:57844"/>
        <note>ligand shared between two neighboring subunits</note>
    </ligand>
</feature>
<feature type="binding site" description="in other chain" evidence="1">
    <location>
        <begin position="177"/>
        <end position="179"/>
    </location>
    <ligand>
        <name>ATP</name>
        <dbReference type="ChEBI" id="CHEBI:30616"/>
        <note>ligand shared between two neighboring subunits</note>
    </ligand>
</feature>
<feature type="binding site" description="in other chain" evidence="1">
    <location>
        <begin position="244"/>
        <end position="245"/>
    </location>
    <ligand>
        <name>ATP</name>
        <dbReference type="ChEBI" id="CHEBI:30616"/>
        <note>ligand shared between two neighboring subunits</note>
    </ligand>
</feature>
<feature type="binding site" evidence="1">
    <location>
        <position position="253"/>
    </location>
    <ligand>
        <name>ATP</name>
        <dbReference type="ChEBI" id="CHEBI:30616"/>
        <note>ligand shared between two neighboring subunits</note>
    </ligand>
</feature>
<feature type="binding site" evidence="1">
    <location>
        <position position="253"/>
    </location>
    <ligand>
        <name>L-methionine</name>
        <dbReference type="ChEBI" id="CHEBI:57844"/>
        <note>ligand shared between two neighboring subunits</note>
    </ligand>
</feature>
<feature type="binding site" description="in other chain" evidence="1">
    <location>
        <begin position="259"/>
        <end position="260"/>
    </location>
    <ligand>
        <name>ATP</name>
        <dbReference type="ChEBI" id="CHEBI:30616"/>
        <note>ligand shared between two neighboring subunits</note>
    </ligand>
</feature>
<feature type="binding site" evidence="1">
    <location>
        <position position="276"/>
    </location>
    <ligand>
        <name>ATP</name>
        <dbReference type="ChEBI" id="CHEBI:30616"/>
        <note>ligand shared between two neighboring subunits</note>
    </ligand>
</feature>
<feature type="binding site" evidence="1">
    <location>
        <position position="280"/>
    </location>
    <ligand>
        <name>ATP</name>
        <dbReference type="ChEBI" id="CHEBI:30616"/>
        <note>ligand shared between two neighboring subunits</note>
    </ligand>
</feature>
<feature type="binding site" description="in other chain" evidence="1">
    <location>
        <position position="284"/>
    </location>
    <ligand>
        <name>L-methionine</name>
        <dbReference type="ChEBI" id="CHEBI:57844"/>
        <note>ligand shared between two neighboring subunits</note>
    </ligand>
</feature>
<proteinExistence type="inferred from homology"/>
<keyword id="KW-0067">ATP-binding</keyword>
<keyword id="KW-0963">Cytoplasm</keyword>
<keyword id="KW-0460">Magnesium</keyword>
<keyword id="KW-0479">Metal-binding</keyword>
<keyword id="KW-0547">Nucleotide-binding</keyword>
<keyword id="KW-0554">One-carbon metabolism</keyword>
<keyword id="KW-0630">Potassium</keyword>
<keyword id="KW-0808">Transferase</keyword>